<reference key="1">
    <citation type="journal article" date="1986" name="J. Biol. Chem.">
        <title>The nucleotide sequences of the rbsD, rbsA, and rbsC genes of Escherichia coli K12.</title>
        <authorList>
            <person name="Bell A.W."/>
            <person name="Buckel S.D."/>
            <person name="Groarke J.M."/>
            <person name="Hope J.N."/>
            <person name="Kingsley D.H."/>
            <person name="Hermodson M.A."/>
        </authorList>
    </citation>
    <scope>NUCLEOTIDE SEQUENCE [GENOMIC DNA]</scope>
    <source>
        <strain>K12</strain>
    </source>
</reference>
<reference key="2">
    <citation type="journal article" date="1993" name="Genomics">
        <title>DNA sequence and analysis of 136 kilobases of the Escherichia coli genome: organizational symmetry around the origin of replication.</title>
        <authorList>
            <person name="Burland V.D."/>
            <person name="Plunkett G. III"/>
            <person name="Daniels D.L."/>
            <person name="Blattner F.R."/>
        </authorList>
    </citation>
    <scope>NUCLEOTIDE SEQUENCE [LARGE SCALE GENOMIC DNA]</scope>
    <source>
        <strain>K12 / MG1655 / ATCC 47076</strain>
    </source>
</reference>
<reference key="3">
    <citation type="journal article" date="1997" name="Science">
        <title>The complete genome sequence of Escherichia coli K-12.</title>
        <authorList>
            <person name="Blattner F.R."/>
            <person name="Plunkett G. III"/>
            <person name="Bloch C.A."/>
            <person name="Perna N.T."/>
            <person name="Burland V."/>
            <person name="Riley M."/>
            <person name="Collado-Vides J."/>
            <person name="Glasner J.D."/>
            <person name="Rode C.K."/>
            <person name="Mayhew G.F."/>
            <person name="Gregor J."/>
            <person name="Davis N.W."/>
            <person name="Kirkpatrick H.A."/>
            <person name="Goeden M.A."/>
            <person name="Rose D.J."/>
            <person name="Mau B."/>
            <person name="Shao Y."/>
        </authorList>
    </citation>
    <scope>NUCLEOTIDE SEQUENCE [LARGE SCALE GENOMIC DNA]</scope>
    <source>
        <strain>K12 / MG1655 / ATCC 47076</strain>
    </source>
</reference>
<reference key="4">
    <citation type="journal article" date="2006" name="Mol. Syst. Biol.">
        <title>Highly accurate genome sequences of Escherichia coli K-12 strains MG1655 and W3110.</title>
        <authorList>
            <person name="Hayashi K."/>
            <person name="Morooka N."/>
            <person name="Yamamoto Y."/>
            <person name="Fujita K."/>
            <person name="Isono K."/>
            <person name="Choi S."/>
            <person name="Ohtsubo E."/>
            <person name="Baba T."/>
            <person name="Wanner B.L."/>
            <person name="Mori H."/>
            <person name="Horiuchi T."/>
        </authorList>
    </citation>
    <scope>NUCLEOTIDE SEQUENCE [LARGE SCALE GENOMIC DNA]</scope>
    <source>
        <strain>K12 / W3110 / ATCC 27325 / DSM 5911</strain>
    </source>
</reference>
<reference key="5">
    <citation type="journal article" date="1986" name="J. Biol. Chem.">
        <title>An analysis of the structure of the product of the rbsA gene of Escherichia coli K12.</title>
        <authorList>
            <person name="Buckel S.D."/>
            <person name="Bell A.W."/>
            <person name="Rao J.K.M."/>
            <person name="Hermodson M.A."/>
        </authorList>
    </citation>
    <scope>PROTEIN SEQUENCE OF 1-10</scope>
    <scope>DISCUSSION OF SEQUENCE</scope>
</reference>
<reference key="6">
    <citation type="journal article" date="1996" name="Protein Sci.">
        <title>The proteins encoded by the rbs operon of Escherichia coli: I. Overproduction, purification, characterization, and functional analysis of RbsA.</title>
        <authorList>
            <person name="Barroga C.F."/>
            <person name="Zhang H."/>
            <person name="Wajih N."/>
            <person name="Bouyer J.H."/>
            <person name="Hermodson M.A."/>
        </authorList>
    </citation>
    <scope>PROTEIN SEQUENCE OF 1-6</scope>
    <scope>FUNCTION</scope>
    <scope>ATPASE ACTIVITY</scope>
    <scope>BIOPHYSICOCHEMICAL PROPERTIES</scope>
    <scope>MUTAGENESIS OF LYS-43</scope>
</reference>
<reference key="7">
    <citation type="journal article" date="1984" name="J. Bacteriol.">
        <title>Molecular cloning and characterization of genes required for ribose transport and utilization in Escherichia coli K-12.</title>
        <authorList>
            <person name="Iida A."/>
            <person name="Harayama S."/>
            <person name="Iino T."/>
            <person name="Hazelbauer G.L."/>
        </authorList>
    </citation>
    <scope>FUNCTION</scope>
</reference>
<reference key="8">
    <citation type="journal article" date="2015" name="J. Biol. Chem.">
        <title>In vitro reassembly of the ribose ATP-binding cassette transporter reveals a distinct set of transport complexes.</title>
        <authorList>
            <person name="Clifton M.C."/>
            <person name="Simon M.J."/>
            <person name="Erramilli S.K."/>
            <person name="Zhang H."/>
            <person name="Zaitseva J."/>
            <person name="Hermodson M.A."/>
            <person name="Stauffacher C.V."/>
        </authorList>
    </citation>
    <scope>FUNCTION</scope>
    <scope>SUBUNIT</scope>
</reference>
<evidence type="ECO:0000255" key="1">
    <source>
        <dbReference type="HAMAP-Rule" id="MF_01716"/>
    </source>
</evidence>
<evidence type="ECO:0000269" key="2">
    <source>
    </source>
</evidence>
<evidence type="ECO:0000269" key="3">
    <source>
    </source>
</evidence>
<evidence type="ECO:0000269" key="4">
    <source>
    </source>
</evidence>
<evidence type="ECO:0000303" key="5">
    <source>
    </source>
</evidence>
<evidence type="ECO:0000305" key="6"/>
<evidence type="ECO:0000305" key="7">
    <source>
    </source>
</evidence>
<evidence type="ECO:0000305" key="8">
    <source>
    </source>
</evidence>
<gene>
    <name evidence="1 5" type="primary">rbsA</name>
    <name type="ordered locus">b3749</name>
    <name type="ordered locus">JW3728</name>
</gene>
<comment type="function">
    <text evidence="1 2 3 4">Part of the ABC transporter complex RbsABC involved in ribose import. Responsible for energy coupling to the transport system.</text>
</comment>
<comment type="catalytic activity">
    <reaction evidence="1 8">
        <text>D-ribose(out) + ATP + H2O = D-ribose(in) + ADP + phosphate + H(+)</text>
        <dbReference type="Rhea" id="RHEA:29903"/>
        <dbReference type="ChEBI" id="CHEBI:15377"/>
        <dbReference type="ChEBI" id="CHEBI:15378"/>
        <dbReference type="ChEBI" id="CHEBI:30616"/>
        <dbReference type="ChEBI" id="CHEBI:43474"/>
        <dbReference type="ChEBI" id="CHEBI:47013"/>
        <dbReference type="ChEBI" id="CHEBI:456216"/>
        <dbReference type="EC" id="7.5.2.7"/>
    </reaction>
</comment>
<comment type="biophysicochemical properties">
    <kinetics>
        <KM evidence="4">140 uM for ATP</KM>
    </kinetics>
</comment>
<comment type="subunit">
    <text evidence="1 2">The complex is composed of an ATP-binding protein (RbsA), two transmembrane proteins (RbsC) and a solute-binding protein (RbsB).</text>
</comment>
<comment type="interaction">
    <interactant intactId="EBI-1132449">
        <id>P04983</id>
    </interactant>
    <interactant intactId="EBI-9126715">
        <id>P16685</id>
        <label>phnG</label>
    </interactant>
    <organismsDiffer>false</organismsDiffer>
    <experiments>3</experiments>
</comment>
<comment type="interaction">
    <interactant intactId="EBI-1132449">
        <id>P04983</id>
    </interactant>
    <interactant intactId="EBI-21444614">
        <id>P0AGI1</id>
        <label>rbsC</label>
    </interactant>
    <organismsDiffer>false</organismsDiffer>
    <experiments>5</experiments>
</comment>
<comment type="subcellular location">
    <subcellularLocation>
        <location evidence="1 7">Cell inner membrane</location>
        <topology evidence="1 7">Peripheral membrane protein</topology>
    </subcellularLocation>
</comment>
<comment type="similarity">
    <text evidence="1">Belongs to the ABC transporter superfamily. Ribose importer (TC 3.A.1.2.1) family.</text>
</comment>
<accession>P04983</accession>
<accession>Q2M867</accession>
<protein>
    <recommendedName>
        <fullName evidence="1 6">Ribose import ATP-binding protein RbsA</fullName>
        <ecNumber evidence="1 8">7.5.2.7</ecNumber>
    </recommendedName>
</protein>
<sequence length="501" mass="55042">MEALLQLKGIDKAFPGVKALSGAALNVYPGRVMALVGENGAGKSTMMKVLTGIYTRDAGTLLWLGKETTFTGPKSSQEAGIGIIHQELNLIPQLTIAENIFLGREFVNRFGKIDWKTMYAEADKLLAKLNLRFKSDKLVGDLSIGDQQMVEIAKVLSFESKVIIMDEPTDALTDTETESLFRVIRELKSQGRGIVYISHRMKEIFEICDDVTVFRDGQFIAEREVASLTEDSLIEMMVGRKLEDQYPHLDKAPGDIRLKVDNLCGPGVNDVSFTLRKGEILGVSGLMGAGRTELMKVLYGALPRTSGYVTLDGHEVVTRSPQDGLANGIVYISEDRKRDGLVLGMSVKENMSLTALRYFSRAGGSLKHADEQQAVSDFIRLFNVKTPSMEQAIGLLSGGNQQKVAIARGLMTRPKVLILDEPTRGVDVGAKKEIYQLINQFKADGLSIILVSSEMPEVLGMSDRIIVMHEGHLSGEFTREQATQEVLMAAAVGKLNRVNQE</sequence>
<name>RBSA_ECOLI</name>
<feature type="chain" id="PRO_0000092956" description="Ribose import ATP-binding protein RbsA">
    <location>
        <begin position="1"/>
        <end position="501"/>
    </location>
</feature>
<feature type="domain" description="ABC transporter 1" evidence="1">
    <location>
        <begin position="5"/>
        <end position="241"/>
    </location>
</feature>
<feature type="domain" description="ABC transporter 2" evidence="1">
    <location>
        <begin position="252"/>
        <end position="495"/>
    </location>
</feature>
<feature type="binding site" evidence="1">
    <location>
        <begin position="37"/>
        <end position="44"/>
    </location>
    <ligand>
        <name>ATP</name>
        <dbReference type="ChEBI" id="CHEBI:30616"/>
    </ligand>
</feature>
<feature type="mutagenesis site" description="Loss of transport." evidence="4">
    <original>K</original>
    <variation>R</variation>
    <location>
        <position position="43"/>
    </location>
</feature>
<keyword id="KW-0067">ATP-binding</keyword>
<keyword id="KW-0997">Cell inner membrane</keyword>
<keyword id="KW-1003">Cell membrane</keyword>
<keyword id="KW-0903">Direct protein sequencing</keyword>
<keyword id="KW-0472">Membrane</keyword>
<keyword id="KW-0547">Nucleotide-binding</keyword>
<keyword id="KW-1185">Reference proteome</keyword>
<keyword id="KW-0677">Repeat</keyword>
<keyword id="KW-0762">Sugar transport</keyword>
<keyword id="KW-1278">Translocase</keyword>
<keyword id="KW-0813">Transport</keyword>
<organism>
    <name type="scientific">Escherichia coli (strain K12)</name>
    <dbReference type="NCBI Taxonomy" id="83333"/>
    <lineage>
        <taxon>Bacteria</taxon>
        <taxon>Pseudomonadati</taxon>
        <taxon>Pseudomonadota</taxon>
        <taxon>Gammaproteobacteria</taxon>
        <taxon>Enterobacterales</taxon>
        <taxon>Enterobacteriaceae</taxon>
        <taxon>Escherichia</taxon>
    </lineage>
</organism>
<dbReference type="EC" id="7.5.2.7" evidence="1 8"/>
<dbReference type="EMBL" id="M13169">
    <property type="protein sequence ID" value="AAA51473.1"/>
    <property type="molecule type" value="Genomic_DNA"/>
</dbReference>
<dbReference type="EMBL" id="L10328">
    <property type="protein sequence ID" value="AAA62102.1"/>
    <property type="molecule type" value="Genomic_DNA"/>
</dbReference>
<dbReference type="EMBL" id="U00096">
    <property type="protein sequence ID" value="AAC76772.1"/>
    <property type="molecule type" value="Genomic_DNA"/>
</dbReference>
<dbReference type="EMBL" id="AP009048">
    <property type="protein sequence ID" value="BAE77539.1"/>
    <property type="molecule type" value="Genomic_DNA"/>
</dbReference>
<dbReference type="PIR" id="B26304">
    <property type="entry name" value="B26304"/>
</dbReference>
<dbReference type="RefSeq" id="NP_418205.1">
    <property type="nucleotide sequence ID" value="NC_000913.3"/>
</dbReference>
<dbReference type="RefSeq" id="WP_000387770.1">
    <property type="nucleotide sequence ID" value="NZ_SSZK01000036.1"/>
</dbReference>
<dbReference type="SMR" id="P04983"/>
<dbReference type="BioGRID" id="4263458">
    <property type="interactions" value="79"/>
</dbReference>
<dbReference type="BioGRID" id="852566">
    <property type="interactions" value="11"/>
</dbReference>
<dbReference type="ComplexPortal" id="CPX-4284">
    <property type="entry name" value="RbsABC ribose ABC transporter"/>
</dbReference>
<dbReference type="DIP" id="DIP-10640N"/>
<dbReference type="FunCoup" id="P04983">
    <property type="interactions" value="270"/>
</dbReference>
<dbReference type="IntAct" id="P04983">
    <property type="interactions" value="13"/>
</dbReference>
<dbReference type="STRING" id="511145.b3749"/>
<dbReference type="TCDB" id="3.A.1.2.1">
    <property type="family name" value="the atp-binding cassette (abc) superfamily"/>
</dbReference>
<dbReference type="jPOST" id="P04983"/>
<dbReference type="PaxDb" id="511145-b3749"/>
<dbReference type="EnsemblBacteria" id="AAC76772">
    <property type="protein sequence ID" value="AAC76772"/>
    <property type="gene ID" value="b3749"/>
</dbReference>
<dbReference type="GeneID" id="75173983"/>
<dbReference type="GeneID" id="948264"/>
<dbReference type="KEGG" id="ecj:JW3728"/>
<dbReference type="KEGG" id="eco:b3749"/>
<dbReference type="KEGG" id="ecoc:C3026_20310"/>
<dbReference type="PATRIC" id="fig|1411691.4.peg.2951"/>
<dbReference type="EchoBASE" id="EB0807"/>
<dbReference type="eggNOG" id="COG1129">
    <property type="taxonomic scope" value="Bacteria"/>
</dbReference>
<dbReference type="HOGENOM" id="CLU_000604_92_3_6"/>
<dbReference type="InParanoid" id="P04983"/>
<dbReference type="OMA" id="KWIGIGP"/>
<dbReference type="OrthoDB" id="9776369at2"/>
<dbReference type="PhylomeDB" id="P04983"/>
<dbReference type="BioCyc" id="EcoCyc:RBSA-MONOMER"/>
<dbReference type="BioCyc" id="MetaCyc:RBSA-MONOMER"/>
<dbReference type="PRO" id="PR:P04983"/>
<dbReference type="Proteomes" id="UP000000625">
    <property type="component" value="Chromosome"/>
</dbReference>
<dbReference type="GO" id="GO:0043190">
    <property type="term" value="C:ATP-binding cassette (ABC) transporter complex"/>
    <property type="evidence" value="ECO:0000314"/>
    <property type="project" value="EcoCyc"/>
</dbReference>
<dbReference type="GO" id="GO:0055052">
    <property type="term" value="C:ATP-binding cassette (ABC) transporter complex, substrate-binding subunit-containing"/>
    <property type="evidence" value="ECO:0000353"/>
    <property type="project" value="ComplexPortal"/>
</dbReference>
<dbReference type="GO" id="GO:0016020">
    <property type="term" value="C:membrane"/>
    <property type="evidence" value="ECO:0000314"/>
    <property type="project" value="ComplexPortal"/>
</dbReference>
<dbReference type="GO" id="GO:0015611">
    <property type="term" value="F:ABC-type D-ribose transporter activity"/>
    <property type="evidence" value="ECO:0007669"/>
    <property type="project" value="UniProtKB-EC"/>
</dbReference>
<dbReference type="GO" id="GO:0015407">
    <property type="term" value="F:ABC-type monosaccharide transporter activity"/>
    <property type="evidence" value="ECO:0000314"/>
    <property type="project" value="EcoCyc"/>
</dbReference>
<dbReference type="GO" id="GO:0005524">
    <property type="term" value="F:ATP binding"/>
    <property type="evidence" value="ECO:0000255"/>
    <property type="project" value="EcoCyc"/>
</dbReference>
<dbReference type="GO" id="GO:0016887">
    <property type="term" value="F:ATP hydrolysis activity"/>
    <property type="evidence" value="ECO:0007669"/>
    <property type="project" value="InterPro"/>
</dbReference>
<dbReference type="GO" id="GO:0015591">
    <property type="term" value="F:D-ribose transmembrane transporter activity"/>
    <property type="evidence" value="ECO:0000314"/>
    <property type="project" value="EcoCyc"/>
</dbReference>
<dbReference type="GO" id="GO:0015752">
    <property type="term" value="P:D-ribose transmembrane transport"/>
    <property type="evidence" value="ECO:0000314"/>
    <property type="project" value="ComplexPortal"/>
</dbReference>
<dbReference type="CDD" id="cd03216">
    <property type="entry name" value="ABC_Carb_Monos_I"/>
    <property type="match status" value="1"/>
</dbReference>
<dbReference type="CDD" id="cd03215">
    <property type="entry name" value="ABC_Carb_Monos_II"/>
    <property type="match status" value="1"/>
</dbReference>
<dbReference type="FunFam" id="3.40.50.300:FF:000126">
    <property type="entry name" value="Galactose/methyl galactoside import ATP-binding protein MglA"/>
    <property type="match status" value="1"/>
</dbReference>
<dbReference type="FunFam" id="3.40.50.300:FF:000127">
    <property type="entry name" value="Ribose import ATP-binding protein RbsA"/>
    <property type="match status" value="1"/>
</dbReference>
<dbReference type="Gene3D" id="3.40.50.300">
    <property type="entry name" value="P-loop containing nucleotide triphosphate hydrolases"/>
    <property type="match status" value="2"/>
</dbReference>
<dbReference type="InterPro" id="IPR003593">
    <property type="entry name" value="AAA+_ATPase"/>
</dbReference>
<dbReference type="InterPro" id="IPR050107">
    <property type="entry name" value="ABC_carbohydrate_import_ATPase"/>
</dbReference>
<dbReference type="InterPro" id="IPR003439">
    <property type="entry name" value="ABC_transporter-like_ATP-bd"/>
</dbReference>
<dbReference type="InterPro" id="IPR017871">
    <property type="entry name" value="ABC_transporter-like_CS"/>
</dbReference>
<dbReference type="InterPro" id="IPR027417">
    <property type="entry name" value="P-loop_NTPase"/>
</dbReference>
<dbReference type="NCBIfam" id="NF008030">
    <property type="entry name" value="PRK10762.1"/>
    <property type="match status" value="1"/>
</dbReference>
<dbReference type="PANTHER" id="PTHR43790">
    <property type="entry name" value="CARBOHYDRATE TRANSPORT ATP-BINDING PROTEIN MG119-RELATED"/>
    <property type="match status" value="1"/>
</dbReference>
<dbReference type="PANTHER" id="PTHR43790:SF3">
    <property type="entry name" value="D-ALLOSE IMPORT ATP-BINDING PROTEIN ALSA-RELATED"/>
    <property type="match status" value="1"/>
</dbReference>
<dbReference type="Pfam" id="PF00005">
    <property type="entry name" value="ABC_tran"/>
    <property type="match status" value="2"/>
</dbReference>
<dbReference type="SMART" id="SM00382">
    <property type="entry name" value="AAA"/>
    <property type="match status" value="2"/>
</dbReference>
<dbReference type="SUPFAM" id="SSF52540">
    <property type="entry name" value="P-loop containing nucleoside triphosphate hydrolases"/>
    <property type="match status" value="2"/>
</dbReference>
<dbReference type="PROSITE" id="PS00211">
    <property type="entry name" value="ABC_TRANSPORTER_1"/>
    <property type="match status" value="1"/>
</dbReference>
<dbReference type="PROSITE" id="PS50893">
    <property type="entry name" value="ABC_TRANSPORTER_2"/>
    <property type="match status" value="1"/>
</dbReference>
<dbReference type="PROSITE" id="PS51254">
    <property type="entry name" value="RBSA"/>
    <property type="match status" value="1"/>
</dbReference>
<proteinExistence type="evidence at protein level"/>